<accession>Q9TLS7</accession>
<reference key="1">
    <citation type="journal article" date="2000" name="J. Mol. Evol.">
        <title>The structure and gene repertoire of an ancient red algal plastid genome.</title>
        <authorList>
            <person name="Gloeckner G."/>
            <person name="Rosenthal A."/>
            <person name="Valentin K.-U."/>
        </authorList>
    </citation>
    <scope>NUCLEOTIDE SEQUENCE [LARGE SCALE GENOMIC DNA]</scope>
    <source>
        <strain>RK-1</strain>
    </source>
</reference>
<feature type="chain" id="PRO_0000199082" description="Allophycocyanin alpha chain">
    <location>
        <begin position="1"/>
        <end position="161"/>
    </location>
</feature>
<feature type="binding site" description="covalent" evidence="1">
    <location>
        <position position="81"/>
    </location>
    <ligand>
        <name>(2R,3E)-phycocyanobilin</name>
        <dbReference type="ChEBI" id="CHEBI:85275"/>
    </ligand>
</feature>
<feature type="modified residue" description="N4-methylasparagine" evidence="1">
    <location>
        <position position="71"/>
    </location>
</feature>
<gene>
    <name type="primary">apcA</name>
</gene>
<dbReference type="EMBL" id="AF022186">
    <property type="protein sequence ID" value="AAF12902.1"/>
    <property type="molecule type" value="Genomic_DNA"/>
</dbReference>
<dbReference type="RefSeq" id="NP_045192.1">
    <property type="nucleotide sequence ID" value="NC_001840.1"/>
</dbReference>
<dbReference type="SMR" id="Q9TLS7"/>
<dbReference type="GeneID" id="800211"/>
<dbReference type="GO" id="GO:0009535">
    <property type="term" value="C:chloroplast thylakoid membrane"/>
    <property type="evidence" value="ECO:0007669"/>
    <property type="project" value="UniProtKB-SubCell"/>
</dbReference>
<dbReference type="GO" id="GO:0030089">
    <property type="term" value="C:phycobilisome"/>
    <property type="evidence" value="ECO:0007669"/>
    <property type="project" value="UniProtKB-KW"/>
</dbReference>
<dbReference type="GO" id="GO:0015979">
    <property type="term" value="P:photosynthesis"/>
    <property type="evidence" value="ECO:0007669"/>
    <property type="project" value="UniProtKB-KW"/>
</dbReference>
<dbReference type="CDD" id="cd12125">
    <property type="entry name" value="APC_alpha"/>
    <property type="match status" value="1"/>
</dbReference>
<dbReference type="Gene3D" id="1.10.490.20">
    <property type="entry name" value="Phycocyanins"/>
    <property type="match status" value="1"/>
</dbReference>
<dbReference type="InterPro" id="IPR009050">
    <property type="entry name" value="Globin-like_sf"/>
</dbReference>
<dbReference type="InterPro" id="IPR012128">
    <property type="entry name" value="Phycobilisome_asu/bsu"/>
</dbReference>
<dbReference type="InterPro" id="IPR038719">
    <property type="entry name" value="Phycobilisome_asu/bsu_sf"/>
</dbReference>
<dbReference type="PANTHER" id="PTHR34011:SF2">
    <property type="entry name" value="ALLOPHYCOCYANIN ALPHA CHAIN"/>
    <property type="match status" value="1"/>
</dbReference>
<dbReference type="PANTHER" id="PTHR34011">
    <property type="entry name" value="PHYCOBILISOME 32.1 KDA LINKER POLYPEPTIDE, PHYCOCYANIN-ASSOCIATED, ROD 2-RELATED"/>
    <property type="match status" value="1"/>
</dbReference>
<dbReference type="Pfam" id="PF00502">
    <property type="entry name" value="Phycobilisome"/>
    <property type="match status" value="1"/>
</dbReference>
<dbReference type="PIRSF" id="PIRSF000081">
    <property type="entry name" value="Phycocyanin"/>
    <property type="match status" value="1"/>
</dbReference>
<dbReference type="SUPFAM" id="SSF46458">
    <property type="entry name" value="Globin-like"/>
    <property type="match status" value="1"/>
</dbReference>
<geneLocation type="chloroplast"/>
<name>PHAA_CYACA</name>
<evidence type="ECO:0000250" key="1"/>
<evidence type="ECO:0000305" key="2"/>
<proteinExistence type="inferred from homology"/>
<comment type="function">
    <text>Light-harvesting photosynthetic bile pigment-protein from the phycobiliprotein complex. Allophycocyanin has a maximum absorption at approximately 650 nanometers.</text>
</comment>
<comment type="subunit">
    <text evidence="1">Heterodimer of an alpha and a beta chain.</text>
</comment>
<comment type="subcellular location">
    <subcellularLocation>
        <location evidence="1">Plastid</location>
        <location evidence="1">Chloroplast thylakoid membrane</location>
        <topology evidence="1">Peripheral membrane protein</topology>
        <orientation evidence="1">Stromal side</orientation>
    </subcellularLocation>
    <text evidence="1">Forms the core of the phycobilisome.</text>
</comment>
<comment type="PTM">
    <text evidence="1">Contains one covalently linked phycocyanobilin chromophore.</text>
</comment>
<comment type="similarity">
    <text evidence="2">Belongs to the phycobiliprotein family.</text>
</comment>
<protein>
    <recommendedName>
        <fullName>Allophycocyanin alpha chain</fullName>
    </recommendedName>
</protein>
<keyword id="KW-0042">Antenna complex</keyword>
<keyword id="KW-0089">Bile pigment</keyword>
<keyword id="KW-0150">Chloroplast</keyword>
<keyword id="KW-0157">Chromophore</keyword>
<keyword id="KW-0249">Electron transport</keyword>
<keyword id="KW-0472">Membrane</keyword>
<keyword id="KW-0488">Methylation</keyword>
<keyword id="KW-0602">Photosynthesis</keyword>
<keyword id="KW-0605">Phycobilisome</keyword>
<keyword id="KW-0934">Plastid</keyword>
<keyword id="KW-0793">Thylakoid</keyword>
<keyword id="KW-0813">Transport</keyword>
<organism>
    <name type="scientific">Cyanidium caldarium</name>
    <name type="common">Red alga</name>
    <dbReference type="NCBI Taxonomy" id="2771"/>
    <lineage>
        <taxon>Eukaryota</taxon>
        <taxon>Rhodophyta</taxon>
        <taxon>Bangiophyceae</taxon>
        <taxon>Cyanidiales</taxon>
        <taxon>Cyanidiaceae</taxon>
        <taxon>Cyanidium</taxon>
    </lineage>
</organism>
<sequence>MSIVTKSIVNADAEARYLSPGELDRIKSFVMSGQRRLRIAQILTDNRERIVKQAGQQLFQKRPDIVSPGGNAYGEEMTATCLRDLDYYLRLITYSVVAGDVIPIEEIGLVGVREMYNSLGTPLSGVAEGIRSMKSVVSGLLAGDDAAEASFYFDYAIGAMQ</sequence>